<dbReference type="PDB" id="4ESA">
    <property type="method" value="X-ray"/>
    <property type="resolution" value="1.45 A"/>
    <property type="chains" value="B/D=1-146"/>
</dbReference>
<dbReference type="PDB" id="6RP5">
    <property type="method" value="X-ray"/>
    <property type="resolution" value="1.49 A"/>
    <property type="chains" value="B=1-144"/>
</dbReference>
<dbReference type="PDBsum" id="4ESA"/>
<dbReference type="PDBsum" id="6RP5"/>
<dbReference type="SMR" id="K7N5M6"/>
<dbReference type="EvolutionaryTrace" id="K7N5M6"/>
<dbReference type="GO" id="GO:0072562">
    <property type="term" value="C:blood microparticle"/>
    <property type="evidence" value="ECO:0007669"/>
    <property type="project" value="TreeGrafter"/>
</dbReference>
<dbReference type="GO" id="GO:0031838">
    <property type="term" value="C:haptoglobin-hemoglobin complex"/>
    <property type="evidence" value="ECO:0007669"/>
    <property type="project" value="TreeGrafter"/>
</dbReference>
<dbReference type="GO" id="GO:0005833">
    <property type="term" value="C:hemoglobin complex"/>
    <property type="evidence" value="ECO:0007669"/>
    <property type="project" value="InterPro"/>
</dbReference>
<dbReference type="GO" id="GO:0031720">
    <property type="term" value="F:haptoglobin binding"/>
    <property type="evidence" value="ECO:0007669"/>
    <property type="project" value="TreeGrafter"/>
</dbReference>
<dbReference type="GO" id="GO:0020037">
    <property type="term" value="F:heme binding"/>
    <property type="evidence" value="ECO:0007669"/>
    <property type="project" value="InterPro"/>
</dbReference>
<dbReference type="GO" id="GO:0046872">
    <property type="term" value="F:metal ion binding"/>
    <property type="evidence" value="ECO:0007669"/>
    <property type="project" value="UniProtKB-KW"/>
</dbReference>
<dbReference type="GO" id="GO:0043177">
    <property type="term" value="F:organic acid binding"/>
    <property type="evidence" value="ECO:0007669"/>
    <property type="project" value="TreeGrafter"/>
</dbReference>
<dbReference type="GO" id="GO:0019825">
    <property type="term" value="F:oxygen binding"/>
    <property type="evidence" value="ECO:0007669"/>
    <property type="project" value="InterPro"/>
</dbReference>
<dbReference type="GO" id="GO:0005344">
    <property type="term" value="F:oxygen carrier activity"/>
    <property type="evidence" value="ECO:0007669"/>
    <property type="project" value="UniProtKB-KW"/>
</dbReference>
<dbReference type="GO" id="GO:0004601">
    <property type="term" value="F:peroxidase activity"/>
    <property type="evidence" value="ECO:0007669"/>
    <property type="project" value="TreeGrafter"/>
</dbReference>
<dbReference type="GO" id="GO:0042744">
    <property type="term" value="P:hydrogen peroxide catabolic process"/>
    <property type="evidence" value="ECO:0007669"/>
    <property type="project" value="TreeGrafter"/>
</dbReference>
<dbReference type="CDD" id="cd08925">
    <property type="entry name" value="Hb-beta-like"/>
    <property type="match status" value="1"/>
</dbReference>
<dbReference type="FunFam" id="1.10.490.10:FF:000001">
    <property type="entry name" value="Hemoglobin subunit beta"/>
    <property type="match status" value="1"/>
</dbReference>
<dbReference type="Gene3D" id="1.10.490.10">
    <property type="entry name" value="Globins"/>
    <property type="match status" value="1"/>
</dbReference>
<dbReference type="InterPro" id="IPR000971">
    <property type="entry name" value="Globin"/>
</dbReference>
<dbReference type="InterPro" id="IPR009050">
    <property type="entry name" value="Globin-like_sf"/>
</dbReference>
<dbReference type="InterPro" id="IPR012292">
    <property type="entry name" value="Globin/Proto"/>
</dbReference>
<dbReference type="InterPro" id="IPR002337">
    <property type="entry name" value="Hemoglobin_b"/>
</dbReference>
<dbReference type="InterPro" id="IPR050056">
    <property type="entry name" value="Hemoglobin_oxygen_transport"/>
</dbReference>
<dbReference type="PANTHER" id="PTHR11442">
    <property type="entry name" value="HEMOGLOBIN FAMILY MEMBER"/>
    <property type="match status" value="1"/>
</dbReference>
<dbReference type="PANTHER" id="PTHR11442:SF7">
    <property type="entry name" value="HEMOGLOBIN SUBUNIT EPSILON"/>
    <property type="match status" value="1"/>
</dbReference>
<dbReference type="Pfam" id="PF00042">
    <property type="entry name" value="Globin"/>
    <property type="match status" value="1"/>
</dbReference>
<dbReference type="PRINTS" id="PR00814">
    <property type="entry name" value="BETAHAEM"/>
</dbReference>
<dbReference type="SUPFAM" id="SSF46458">
    <property type="entry name" value="Globin-like"/>
    <property type="match status" value="1"/>
</dbReference>
<dbReference type="PROSITE" id="PS01033">
    <property type="entry name" value="GLOBIN"/>
    <property type="match status" value="1"/>
</dbReference>
<feature type="chain" id="PRO_0000430574" description="Hemoglobin subunit beta-1">
    <location>
        <begin position="1"/>
        <end position="146"/>
    </location>
</feature>
<feature type="domain" description="Globin" evidence="2">
    <location>
        <begin position="2"/>
        <end position="146"/>
    </location>
</feature>
<feature type="binding site" description="distal binding residue" evidence="4">
    <location>
        <position position="63"/>
    </location>
    <ligand>
        <name>heme b</name>
        <dbReference type="ChEBI" id="CHEBI:60344"/>
    </ligand>
    <ligandPart>
        <name>Fe</name>
        <dbReference type="ChEBI" id="CHEBI:18248"/>
    </ligandPart>
</feature>
<feature type="binding site" description="proximal binding residue" evidence="4">
    <location>
        <position position="92"/>
    </location>
    <ligand>
        <name>heme b</name>
        <dbReference type="ChEBI" id="CHEBI:60344"/>
    </ligand>
    <ligandPart>
        <name>Fe</name>
        <dbReference type="ChEBI" id="CHEBI:18248"/>
    </ligandPart>
</feature>
<feature type="helix" evidence="8">
    <location>
        <begin position="5"/>
        <end position="16"/>
    </location>
</feature>
<feature type="helix" evidence="8">
    <location>
        <begin position="20"/>
        <end position="34"/>
    </location>
</feature>
<feature type="helix" evidence="8">
    <location>
        <begin position="36"/>
        <end position="41"/>
    </location>
</feature>
<feature type="helix" evidence="8">
    <location>
        <begin position="43"/>
        <end position="45"/>
    </location>
</feature>
<feature type="helix" evidence="8">
    <location>
        <begin position="51"/>
        <end position="56"/>
    </location>
</feature>
<feature type="helix" evidence="8">
    <location>
        <begin position="58"/>
        <end position="76"/>
    </location>
</feature>
<feature type="helix" evidence="8">
    <location>
        <begin position="78"/>
        <end position="80"/>
    </location>
</feature>
<feature type="helix" evidence="8">
    <location>
        <begin position="81"/>
        <end position="84"/>
    </location>
</feature>
<feature type="helix" evidence="8">
    <location>
        <begin position="86"/>
        <end position="93"/>
    </location>
</feature>
<feature type="helix" evidence="8">
    <location>
        <begin position="101"/>
        <end position="118"/>
    </location>
</feature>
<feature type="helix" evidence="8">
    <location>
        <begin position="119"/>
        <end position="121"/>
    </location>
</feature>
<feature type="helix" evidence="8">
    <location>
        <begin position="124"/>
        <end position="141"/>
    </location>
</feature>
<comment type="function">
    <text evidence="5">Involved in oxygen transport from gills to the various peripheral tissues.</text>
</comment>
<comment type="subunit">
    <text evidence="4">Hb1 is a heterotetramer of two alpha-1 chains and two beta-1 chains. Hb2 is a heterotetramer of two alpha-2 chains and two beta-1 chains. HbC is a heterotetramer of two alpha-1 chains and two beta-2 chains.</text>
</comment>
<comment type="tissue specificity">
    <text evidence="6">Red blood cells.</text>
</comment>
<comment type="miscellaneous">
    <text evidence="4">This fish has three hemoglobins: Hb1, Hb2 and HbC accounting for about 70%, 5% and 25% of the total, respectively. Hb1 has high oxygen affinity and displays strong Bohr, Root and phosphate effects.</text>
</comment>
<comment type="similarity">
    <text evidence="3">Belongs to the globin family.</text>
</comment>
<organism evidence="7">
    <name type="scientific">Eleginops maclovinus</name>
    <name type="common">Patagonian blennie</name>
    <name type="synonym">Eleginus maclovinus</name>
    <dbReference type="NCBI Taxonomy" id="56733"/>
    <lineage>
        <taxon>Eukaryota</taxon>
        <taxon>Metazoa</taxon>
        <taxon>Chordata</taxon>
        <taxon>Craniata</taxon>
        <taxon>Vertebrata</taxon>
        <taxon>Euteleostomi</taxon>
        <taxon>Actinopterygii</taxon>
        <taxon>Neopterygii</taxon>
        <taxon>Teleostei</taxon>
        <taxon>Neoteleostei</taxon>
        <taxon>Acanthomorphata</taxon>
        <taxon>Eupercaria</taxon>
        <taxon>Perciformes</taxon>
        <taxon>Notothenioidei</taxon>
        <taxon>Eleginopidae</taxon>
        <taxon>Eleginops</taxon>
    </lineage>
</organism>
<evidence type="ECO:0000250" key="1">
    <source>
        <dbReference type="UniProtKB" id="P83624"/>
    </source>
</evidence>
<evidence type="ECO:0000255" key="2">
    <source>
        <dbReference type="PROSITE-ProRule" id="PRU00238"/>
    </source>
</evidence>
<evidence type="ECO:0000255" key="3">
    <source>
        <dbReference type="RuleBase" id="RU000356"/>
    </source>
</evidence>
<evidence type="ECO:0000269" key="4">
    <source>
    </source>
</evidence>
<evidence type="ECO:0000303" key="5">
    <source>
    </source>
</evidence>
<evidence type="ECO:0000305" key="6"/>
<evidence type="ECO:0000312" key="7">
    <source>
        <dbReference type="PDB" id="4ESA"/>
    </source>
</evidence>
<evidence type="ECO:0007829" key="8">
    <source>
        <dbReference type="PDB" id="4ESA"/>
    </source>
</evidence>
<proteinExistence type="evidence at protein level"/>
<sequence length="146" mass="16133">VEWTDQERATISSIFGSLDYDDIGPKALSRCLIVYPWTQRHFGSFGNLYNAEAIIGNQKVAAHGIKVLHGLDRAVKNMDNIKEIYAELSILHSEKLHVDPDNFKLLADCLTIVVAAKMGSGFNPGTQATFQKFLAVVVSALGKQYH</sequence>
<gene>
    <name evidence="1" type="primary">hbb1</name>
</gene>
<reference evidence="7" key="1">
    <citation type="journal article" date="2012" name="Mol. Biosyst.">
        <title>ATP regulation of the ligand-binding properties in temperate and cold-adapted haemoglobins. X-ray structure and ligand-binding kinetics in the sub-Antarctic fish Eleginops maclovinus.</title>
        <authorList>
            <person name="Coppola D."/>
            <person name="Abbruzzetti S."/>
            <person name="Nicoletti F."/>
            <person name="Merlino A."/>
            <person name="Gambacurta A."/>
            <person name="Giordano D."/>
            <person name="Howes B.D."/>
            <person name="De Sanctis G."/>
            <person name="Vitagliano L."/>
            <person name="Bruno S."/>
            <person name="di Prisco G."/>
            <person name="Mazzarella L."/>
            <person name="Smulevich G."/>
            <person name="Coletta M."/>
            <person name="Viappiani C."/>
            <person name="Vergara A."/>
            <person name="Verde C."/>
        </authorList>
    </citation>
    <scope>PROTEIN SEQUENCE</scope>
    <scope>FUNCTION</scope>
    <scope>SUBUNIT</scope>
    <scope>X-RAY CRYSTALLOGRAPHY (1.45 ANGSTROMS) IN COMPLEX WITH HEME AND CARBON MONOXIDE</scope>
    <source>
        <tissue evidence="5">Blood</tissue>
    </source>
</reference>
<name>HBB1_ELEMC</name>
<protein>
    <recommendedName>
        <fullName evidence="1">Hemoglobin subunit beta-1</fullName>
    </recommendedName>
    <alternativeName>
        <fullName evidence="1">Beta-1-globin</fullName>
    </alternativeName>
    <alternativeName>
        <fullName evidence="5">Hemoglobin beta-1 chain</fullName>
    </alternativeName>
</protein>
<keyword id="KW-0002">3D-structure</keyword>
<keyword id="KW-0903">Direct protein sequencing</keyword>
<keyword id="KW-0349">Heme</keyword>
<keyword id="KW-0408">Iron</keyword>
<keyword id="KW-0479">Metal-binding</keyword>
<keyword id="KW-0561">Oxygen transport</keyword>
<keyword id="KW-0813">Transport</keyword>
<accession>K7N5M6</accession>
<accession>P86714</accession>